<gene>
    <name evidence="1" type="primary">der</name>
    <name type="synonym">engA</name>
    <name type="ordered locus">JTY_1727</name>
</gene>
<feature type="chain" id="PRO_1000124364" description="GTPase Der">
    <location>
        <begin position="1"/>
        <end position="463"/>
    </location>
</feature>
<feature type="domain" description="EngA-type G 1">
    <location>
        <begin position="27"/>
        <end position="190"/>
    </location>
</feature>
<feature type="domain" description="EngA-type G 2">
    <location>
        <begin position="200"/>
        <end position="373"/>
    </location>
</feature>
<feature type="domain" description="KH-like" evidence="1">
    <location>
        <begin position="374"/>
        <end position="456"/>
    </location>
</feature>
<feature type="binding site" evidence="1">
    <location>
        <begin position="33"/>
        <end position="40"/>
    </location>
    <ligand>
        <name>GTP</name>
        <dbReference type="ChEBI" id="CHEBI:37565"/>
        <label>1</label>
    </ligand>
</feature>
<feature type="binding site" evidence="1">
    <location>
        <begin position="80"/>
        <end position="84"/>
    </location>
    <ligand>
        <name>GTP</name>
        <dbReference type="ChEBI" id="CHEBI:37565"/>
        <label>1</label>
    </ligand>
</feature>
<feature type="binding site" evidence="1">
    <location>
        <begin position="142"/>
        <end position="145"/>
    </location>
    <ligand>
        <name>GTP</name>
        <dbReference type="ChEBI" id="CHEBI:37565"/>
        <label>1</label>
    </ligand>
</feature>
<feature type="binding site" evidence="1">
    <location>
        <begin position="206"/>
        <end position="213"/>
    </location>
    <ligand>
        <name>GTP</name>
        <dbReference type="ChEBI" id="CHEBI:37565"/>
        <label>2</label>
    </ligand>
</feature>
<feature type="binding site" evidence="1">
    <location>
        <begin position="253"/>
        <end position="257"/>
    </location>
    <ligand>
        <name>GTP</name>
        <dbReference type="ChEBI" id="CHEBI:37565"/>
        <label>2</label>
    </ligand>
</feature>
<feature type="binding site" evidence="1">
    <location>
        <begin position="318"/>
        <end position="321"/>
    </location>
    <ligand>
        <name>GTP</name>
        <dbReference type="ChEBI" id="CHEBI:37565"/>
        <label>2</label>
    </ligand>
</feature>
<protein>
    <recommendedName>
        <fullName evidence="1">GTPase Der</fullName>
    </recommendedName>
    <alternativeName>
        <fullName evidence="1">GTP-binding protein EngA</fullName>
    </alternativeName>
</protein>
<name>DER_MYCBT</name>
<evidence type="ECO:0000255" key="1">
    <source>
        <dbReference type="HAMAP-Rule" id="MF_00195"/>
    </source>
</evidence>
<organism>
    <name type="scientific">Mycobacterium bovis (strain BCG / Tokyo 172 / ATCC 35737 / TMC 1019)</name>
    <dbReference type="NCBI Taxonomy" id="561275"/>
    <lineage>
        <taxon>Bacteria</taxon>
        <taxon>Bacillati</taxon>
        <taxon>Actinomycetota</taxon>
        <taxon>Actinomycetes</taxon>
        <taxon>Mycobacteriales</taxon>
        <taxon>Mycobacteriaceae</taxon>
        <taxon>Mycobacterium</taxon>
        <taxon>Mycobacterium tuberculosis complex</taxon>
    </lineage>
</organism>
<accession>C1ANY6</accession>
<reference key="1">
    <citation type="journal article" date="2009" name="Vaccine">
        <title>Whole genome sequence analysis of Mycobacterium bovis bacillus Calmette-Guerin (BCG) Tokyo 172: a comparative study of BCG vaccine substrains.</title>
        <authorList>
            <person name="Seki M."/>
            <person name="Honda I."/>
            <person name="Fujita I."/>
            <person name="Yano I."/>
            <person name="Yamamoto S."/>
            <person name="Koyama A."/>
        </authorList>
    </citation>
    <scope>NUCLEOTIDE SEQUENCE [LARGE SCALE GENOMIC DNA]</scope>
    <source>
        <strain>BCG / Tokyo 172 / ATCC 35737 / TMC 1019</strain>
    </source>
</reference>
<sequence length="463" mass="49958">MTQDGTWVDESDWQLDDSEIAESGAAPVVAVVGRPNVGKSTLVNRILGRREAVVQDIPGVTRDRVCYDALWTGRRFVVQDTGGWEPNAKGLQRLVAEQASVAMRTADAVILVVDAGVGATAADEAAARILLRSGKPVFLAANKVDSEKGESDAAALWSLGLGEPHAISAMHGRGVADLLDGVLAALPEVGESASASGGPRRVALVGKPNVGKSSLLNKLAGDQRSVVHEAAGTTVDPVDSLIELGGDVWRFVDTAGLRRKVGQASGHEFYASVRTHAAIDSAEVAIVLIDASQPLTEQDLRVISMVIEAGRALVLAYNKWDLVDEDRRELLQREIDRELVQVRWAQRVNISAKTGRAVHKLVPAMEDALASWDTRIATGPLNTWLTEVTAATPPPVRGGKQPRILFATQATARPPTFVLFTTGFLEAGYRRFLERRLRETFGFDGSPIRVNVRVREKRAGKRR</sequence>
<proteinExistence type="inferred from homology"/>
<comment type="function">
    <text evidence="1">GTPase that plays an essential role in the late steps of ribosome biogenesis.</text>
</comment>
<comment type="subunit">
    <text evidence="1">Associates with the 50S ribosomal subunit.</text>
</comment>
<comment type="similarity">
    <text evidence="1">Belongs to the TRAFAC class TrmE-Era-EngA-EngB-Septin-like GTPase superfamily. EngA (Der) GTPase family.</text>
</comment>
<dbReference type="EMBL" id="AP010918">
    <property type="protein sequence ID" value="BAH26015.1"/>
    <property type="molecule type" value="Genomic_DNA"/>
</dbReference>
<dbReference type="RefSeq" id="WP_003898984.1">
    <property type="nucleotide sequence ID" value="NZ_CP014566.1"/>
</dbReference>
<dbReference type="SMR" id="C1ANY6"/>
<dbReference type="GeneID" id="45425684"/>
<dbReference type="KEGG" id="mbt:JTY_1727"/>
<dbReference type="HOGENOM" id="CLU_016077_6_2_11"/>
<dbReference type="GO" id="GO:0016887">
    <property type="term" value="F:ATP hydrolysis activity"/>
    <property type="evidence" value="ECO:0007669"/>
    <property type="project" value="InterPro"/>
</dbReference>
<dbReference type="GO" id="GO:0005525">
    <property type="term" value="F:GTP binding"/>
    <property type="evidence" value="ECO:0007669"/>
    <property type="project" value="UniProtKB-UniRule"/>
</dbReference>
<dbReference type="GO" id="GO:0043022">
    <property type="term" value="F:ribosome binding"/>
    <property type="evidence" value="ECO:0007669"/>
    <property type="project" value="TreeGrafter"/>
</dbReference>
<dbReference type="GO" id="GO:0042254">
    <property type="term" value="P:ribosome biogenesis"/>
    <property type="evidence" value="ECO:0007669"/>
    <property type="project" value="UniProtKB-KW"/>
</dbReference>
<dbReference type="CDD" id="cd01894">
    <property type="entry name" value="EngA1"/>
    <property type="match status" value="1"/>
</dbReference>
<dbReference type="CDD" id="cd01895">
    <property type="entry name" value="EngA2"/>
    <property type="match status" value="1"/>
</dbReference>
<dbReference type="FunFam" id="3.30.300.20:FF:000004">
    <property type="entry name" value="GTPase Der"/>
    <property type="match status" value="1"/>
</dbReference>
<dbReference type="FunFam" id="3.40.50.300:FF:000040">
    <property type="entry name" value="GTPase Der"/>
    <property type="match status" value="1"/>
</dbReference>
<dbReference type="FunFam" id="3.40.50.300:FF:000057">
    <property type="entry name" value="GTPase Der"/>
    <property type="match status" value="1"/>
</dbReference>
<dbReference type="Gene3D" id="3.30.300.20">
    <property type="match status" value="1"/>
</dbReference>
<dbReference type="Gene3D" id="3.40.50.300">
    <property type="entry name" value="P-loop containing nucleotide triphosphate hydrolases"/>
    <property type="match status" value="2"/>
</dbReference>
<dbReference type="HAMAP" id="MF_00195">
    <property type="entry name" value="GTPase_Der"/>
    <property type="match status" value="1"/>
</dbReference>
<dbReference type="InterPro" id="IPR003593">
    <property type="entry name" value="AAA+_ATPase"/>
</dbReference>
<dbReference type="InterPro" id="IPR031166">
    <property type="entry name" value="G_ENGA"/>
</dbReference>
<dbReference type="InterPro" id="IPR006073">
    <property type="entry name" value="GTP-bd"/>
</dbReference>
<dbReference type="InterPro" id="IPR016484">
    <property type="entry name" value="GTPase_Der"/>
</dbReference>
<dbReference type="InterPro" id="IPR032859">
    <property type="entry name" value="KH_dom-like"/>
</dbReference>
<dbReference type="InterPro" id="IPR015946">
    <property type="entry name" value="KH_dom-like_a/b"/>
</dbReference>
<dbReference type="InterPro" id="IPR027417">
    <property type="entry name" value="P-loop_NTPase"/>
</dbReference>
<dbReference type="InterPro" id="IPR005225">
    <property type="entry name" value="Small_GTP-bd"/>
</dbReference>
<dbReference type="NCBIfam" id="TIGR03594">
    <property type="entry name" value="GTPase_EngA"/>
    <property type="match status" value="1"/>
</dbReference>
<dbReference type="NCBIfam" id="NF002828">
    <property type="entry name" value="PRK03003.1"/>
    <property type="match status" value="1"/>
</dbReference>
<dbReference type="NCBIfam" id="TIGR00231">
    <property type="entry name" value="small_GTP"/>
    <property type="match status" value="2"/>
</dbReference>
<dbReference type="PANTHER" id="PTHR43834">
    <property type="entry name" value="GTPASE DER"/>
    <property type="match status" value="1"/>
</dbReference>
<dbReference type="PANTHER" id="PTHR43834:SF6">
    <property type="entry name" value="GTPASE DER"/>
    <property type="match status" value="1"/>
</dbReference>
<dbReference type="Pfam" id="PF14714">
    <property type="entry name" value="KH_dom-like"/>
    <property type="match status" value="1"/>
</dbReference>
<dbReference type="Pfam" id="PF01926">
    <property type="entry name" value="MMR_HSR1"/>
    <property type="match status" value="2"/>
</dbReference>
<dbReference type="PIRSF" id="PIRSF006485">
    <property type="entry name" value="GTP-binding_EngA"/>
    <property type="match status" value="1"/>
</dbReference>
<dbReference type="PRINTS" id="PR00326">
    <property type="entry name" value="GTP1OBG"/>
</dbReference>
<dbReference type="SMART" id="SM00382">
    <property type="entry name" value="AAA"/>
    <property type="match status" value="2"/>
</dbReference>
<dbReference type="SUPFAM" id="SSF52540">
    <property type="entry name" value="P-loop containing nucleoside triphosphate hydrolases"/>
    <property type="match status" value="2"/>
</dbReference>
<dbReference type="PROSITE" id="PS51712">
    <property type="entry name" value="G_ENGA"/>
    <property type="match status" value="2"/>
</dbReference>
<keyword id="KW-0342">GTP-binding</keyword>
<keyword id="KW-0547">Nucleotide-binding</keyword>
<keyword id="KW-0677">Repeat</keyword>
<keyword id="KW-0690">Ribosome biogenesis</keyword>